<feature type="chain" id="PRO_0000220602" description="Damage-control phosphatase At2g17340">
    <location>
        <begin position="1"/>
        <end position="367"/>
    </location>
</feature>
<feature type="short sequence motif" description="Subfamily II EGMGR motif" evidence="6">
    <location>
        <begin position="318"/>
        <end position="322"/>
    </location>
</feature>
<feature type="binding site" evidence="1">
    <location>
        <position position="220"/>
    </location>
    <ligand>
        <name>Mn(2+)</name>
        <dbReference type="ChEBI" id="CHEBI:29035"/>
        <note>catalytic</note>
    </ligand>
</feature>
<feature type="binding site" evidence="1">
    <location>
        <position position="221"/>
    </location>
    <ligand>
        <name>Mn(2+)</name>
        <dbReference type="ChEBI" id="CHEBI:29035"/>
        <note>catalytic</note>
    </ligand>
</feature>
<feature type="binding site" evidence="1">
    <location>
        <position position="256"/>
    </location>
    <ligand>
        <name>Mn(2+)</name>
        <dbReference type="ChEBI" id="CHEBI:29035"/>
        <note>catalytic</note>
    </ligand>
</feature>
<feature type="modified residue" description="N-acetylmethionine" evidence="7">
    <location>
        <position position="1"/>
    </location>
</feature>
<feature type="mutagenesis site" description="Abolishes catalytic activity." evidence="2">
    <original>D</original>
    <variation>A</variation>
    <location>
        <position position="220"/>
    </location>
</feature>
<feature type="mutagenesis site" description="Abolishes catalytic activity." evidence="2">
    <original>N</original>
    <variation>A</variation>
    <location>
        <position position="221"/>
    </location>
</feature>
<feature type="mutagenesis site" description="Abolishes catalytic activity." evidence="2">
    <original>D</original>
    <variation>A</variation>
    <location>
        <position position="256"/>
    </location>
</feature>
<feature type="sequence conflict" description="In Ref. 4; AAM63619." evidence="4" ref="4">
    <original>C</original>
    <variation>H</variation>
    <location>
        <position position="259"/>
    </location>
</feature>
<feature type="turn" evidence="8">
    <location>
        <begin position="18"/>
        <end position="20"/>
    </location>
</feature>
<feature type="strand" evidence="9">
    <location>
        <begin position="23"/>
        <end position="26"/>
    </location>
</feature>
<feature type="helix" evidence="8">
    <location>
        <begin position="40"/>
        <end position="50"/>
    </location>
</feature>
<feature type="helix" evidence="8">
    <location>
        <begin position="53"/>
        <end position="61"/>
    </location>
</feature>
<feature type="helix" evidence="8">
    <location>
        <begin position="69"/>
        <end position="89"/>
    </location>
</feature>
<feature type="helix" evidence="8">
    <location>
        <begin position="93"/>
        <end position="95"/>
    </location>
</feature>
<feature type="helix" evidence="8">
    <location>
        <begin position="100"/>
        <end position="113"/>
    </location>
</feature>
<feature type="helix" evidence="8">
    <location>
        <begin position="121"/>
        <end position="143"/>
    </location>
</feature>
<feature type="helix" evidence="8">
    <location>
        <begin position="148"/>
        <end position="164"/>
    </location>
</feature>
<feature type="helix" evidence="8">
    <location>
        <begin position="183"/>
        <end position="186"/>
    </location>
</feature>
<feature type="strand" evidence="8">
    <location>
        <begin position="196"/>
        <end position="198"/>
    </location>
</feature>
<feature type="helix" evidence="8">
    <location>
        <begin position="200"/>
        <end position="208"/>
    </location>
</feature>
<feature type="strand" evidence="8">
    <location>
        <begin position="214"/>
        <end position="218"/>
    </location>
</feature>
<feature type="helix" evidence="8">
    <location>
        <begin position="224"/>
        <end position="228"/>
    </location>
</feature>
<feature type="helix" evidence="8">
    <location>
        <begin position="230"/>
        <end position="239"/>
    </location>
</feature>
<feature type="strand" evidence="8">
    <location>
        <begin position="243"/>
        <end position="251"/>
    </location>
</feature>
<feature type="helix" evidence="8">
    <location>
        <begin position="259"/>
        <end position="269"/>
    </location>
</feature>
<feature type="strand" evidence="8">
    <location>
        <begin position="284"/>
        <end position="288"/>
    </location>
</feature>
<feature type="strand" evidence="8">
    <location>
        <begin position="293"/>
        <end position="295"/>
    </location>
</feature>
<feature type="helix" evidence="8">
    <location>
        <begin position="303"/>
        <end position="309"/>
    </location>
</feature>
<feature type="strand" evidence="8">
    <location>
        <begin position="313"/>
        <end position="319"/>
    </location>
</feature>
<feature type="helix" evidence="8">
    <location>
        <begin position="320"/>
        <end position="323"/>
    </location>
</feature>
<feature type="strand" evidence="8">
    <location>
        <begin position="333"/>
        <end position="341"/>
    </location>
</feature>
<feature type="helix" evidence="8">
    <location>
        <begin position="345"/>
        <end position="351"/>
    </location>
</feature>
<feature type="strand" evidence="8">
    <location>
        <begin position="358"/>
        <end position="363"/>
    </location>
</feature>
<sequence>MESDSEMVPFPQLPMPIENNYRACTIPYRFPSDDPKKATPNEISWINVFANSIPSFKKRAESDITVPDAPARAEKFAERYAGILEDLKKDPESHGGPPDGILLCRLREQVLRELGFRDIFKKVKDEENAKAISLFPQVVSLSDAIEDDGKRLENLVRGIFAGNIFDLGSAQLAEVFSRDGMSFLASCQNLVPRPWVIDDLENFQAKWINKSWKKAVIFVDNSGADIILGILPFARELLRRGAQVVLAANELPSINDITCTELTEILSQLKDENGQLLGVDTSKLLIANSGNDLPVIDLSRVSQELAYLSSDADLVIVEGMGRGIETNLYAQFKCDSLKIGMVKHLEVAEFLGGRLYDCVFKFNEVQS</sequence>
<proteinExistence type="evidence at protein level"/>
<gene>
    <name type="ordered locus">At2g17340</name>
    <name type="ORF">F5J6.10</name>
</gene>
<reference key="1">
    <citation type="journal article" date="1999" name="Nature">
        <title>Sequence and analysis of chromosome 2 of the plant Arabidopsis thaliana.</title>
        <authorList>
            <person name="Lin X."/>
            <person name="Kaul S."/>
            <person name="Rounsley S.D."/>
            <person name="Shea T.P."/>
            <person name="Benito M.-I."/>
            <person name="Town C.D."/>
            <person name="Fujii C.Y."/>
            <person name="Mason T.M."/>
            <person name="Bowman C.L."/>
            <person name="Barnstead M.E."/>
            <person name="Feldblyum T.V."/>
            <person name="Buell C.R."/>
            <person name="Ketchum K.A."/>
            <person name="Lee J.J."/>
            <person name="Ronning C.M."/>
            <person name="Koo H.L."/>
            <person name="Moffat K.S."/>
            <person name="Cronin L.A."/>
            <person name="Shen M."/>
            <person name="Pai G."/>
            <person name="Van Aken S."/>
            <person name="Umayam L."/>
            <person name="Tallon L.J."/>
            <person name="Gill J.E."/>
            <person name="Adams M.D."/>
            <person name="Carrera A.J."/>
            <person name="Creasy T.H."/>
            <person name="Goodman H.M."/>
            <person name="Somerville C.R."/>
            <person name="Copenhaver G.P."/>
            <person name="Preuss D."/>
            <person name="Nierman W.C."/>
            <person name="White O."/>
            <person name="Eisen J.A."/>
            <person name="Salzberg S.L."/>
            <person name="Fraser C.M."/>
            <person name="Venter J.C."/>
        </authorList>
    </citation>
    <scope>NUCLEOTIDE SEQUENCE [LARGE SCALE GENOMIC DNA]</scope>
    <source>
        <strain>cv. Columbia</strain>
    </source>
</reference>
<reference key="2">
    <citation type="journal article" date="2017" name="Plant J.">
        <title>Araport11: a complete reannotation of the Arabidopsis thaliana reference genome.</title>
        <authorList>
            <person name="Cheng C.Y."/>
            <person name="Krishnakumar V."/>
            <person name="Chan A.P."/>
            <person name="Thibaud-Nissen F."/>
            <person name="Schobel S."/>
            <person name="Town C.D."/>
        </authorList>
    </citation>
    <scope>GENOME REANNOTATION</scope>
    <source>
        <strain>cv. Columbia</strain>
    </source>
</reference>
<reference key="3">
    <citation type="journal article" date="2003" name="Science">
        <title>Empirical analysis of transcriptional activity in the Arabidopsis genome.</title>
        <authorList>
            <person name="Yamada K."/>
            <person name="Lim J."/>
            <person name="Dale J.M."/>
            <person name="Chen H."/>
            <person name="Shinn P."/>
            <person name="Palm C.J."/>
            <person name="Southwick A.M."/>
            <person name="Wu H.C."/>
            <person name="Kim C.J."/>
            <person name="Nguyen M."/>
            <person name="Pham P.K."/>
            <person name="Cheuk R.F."/>
            <person name="Karlin-Newmann G."/>
            <person name="Liu S.X."/>
            <person name="Lam B."/>
            <person name="Sakano H."/>
            <person name="Wu T."/>
            <person name="Yu G."/>
            <person name="Miranda M."/>
            <person name="Quach H.L."/>
            <person name="Tripp M."/>
            <person name="Chang C.H."/>
            <person name="Lee J.M."/>
            <person name="Toriumi M.J."/>
            <person name="Chan M.M."/>
            <person name="Tang C.C."/>
            <person name="Onodera C.S."/>
            <person name="Deng J.M."/>
            <person name="Akiyama K."/>
            <person name="Ansari Y."/>
            <person name="Arakawa T."/>
            <person name="Banh J."/>
            <person name="Banno F."/>
            <person name="Bowser L."/>
            <person name="Brooks S.Y."/>
            <person name="Carninci P."/>
            <person name="Chao Q."/>
            <person name="Choy N."/>
            <person name="Enju A."/>
            <person name="Goldsmith A.D."/>
            <person name="Gurjal M."/>
            <person name="Hansen N.F."/>
            <person name="Hayashizaki Y."/>
            <person name="Johnson-Hopson C."/>
            <person name="Hsuan V.W."/>
            <person name="Iida K."/>
            <person name="Karnes M."/>
            <person name="Khan S."/>
            <person name="Koesema E."/>
            <person name="Ishida J."/>
            <person name="Jiang P.X."/>
            <person name="Jones T."/>
            <person name="Kawai J."/>
            <person name="Kamiya A."/>
            <person name="Meyers C."/>
            <person name="Nakajima M."/>
            <person name="Narusaka M."/>
            <person name="Seki M."/>
            <person name="Sakurai T."/>
            <person name="Satou M."/>
            <person name="Tamse R."/>
            <person name="Vaysberg M."/>
            <person name="Wallender E.K."/>
            <person name="Wong C."/>
            <person name="Yamamura Y."/>
            <person name="Yuan S."/>
            <person name="Shinozaki K."/>
            <person name="Davis R.W."/>
            <person name="Theologis A."/>
            <person name="Ecker J.R."/>
        </authorList>
    </citation>
    <scope>NUCLEOTIDE SEQUENCE [LARGE SCALE MRNA]</scope>
    <source>
        <strain>cv. Columbia</strain>
    </source>
</reference>
<reference key="4">
    <citation type="submission" date="2002-03" db="EMBL/GenBank/DDBJ databases">
        <title>Full-length cDNA from Arabidopsis thaliana.</title>
        <authorList>
            <person name="Brover V.V."/>
            <person name="Troukhan M.E."/>
            <person name="Alexandrov N.A."/>
            <person name="Lu Y.-P."/>
            <person name="Flavell R.B."/>
            <person name="Feldmann K.A."/>
        </authorList>
    </citation>
    <scope>NUCLEOTIDE SEQUENCE [LARGE SCALE MRNA]</scope>
</reference>
<reference key="5">
    <citation type="journal article" date="2012" name="Mol. Cell. Proteomics">
        <title>Comparative large-scale characterisation of plant vs. mammal proteins reveals similar and idiosyncratic N-alpha acetylation features.</title>
        <authorList>
            <person name="Bienvenut W.V."/>
            <person name="Sumpton D."/>
            <person name="Martinez A."/>
            <person name="Lilla S."/>
            <person name="Espagne C."/>
            <person name="Meinnel T."/>
            <person name="Giglione C."/>
        </authorList>
    </citation>
    <scope>ACETYLATION [LARGE SCALE ANALYSIS] AT MET-1</scope>
    <scope>IDENTIFICATION BY MASS SPECTROMETRY [LARGE SCALE ANALYSIS]</scope>
</reference>
<reference key="6">
    <citation type="journal article" date="2016" name="Nat. Chem. Biol.">
        <title>A family of metal-dependent phosphatases implicated in metabolite damage-control.</title>
        <authorList>
            <person name="Huang L."/>
            <person name="Khusnutdinova A."/>
            <person name="Nocek B."/>
            <person name="Brown G."/>
            <person name="Xu X."/>
            <person name="Cui H."/>
            <person name="Petit P."/>
            <person name="Flick R."/>
            <person name="Zallot R."/>
            <person name="Balmant K."/>
            <person name="Ziemak M.J."/>
            <person name="Shanklin J."/>
            <person name="de Crecy-Lagard V."/>
            <person name="Fiehn O."/>
            <person name="Gregory J.F. III"/>
            <person name="Joachimiak A."/>
            <person name="Savchenko A."/>
            <person name="Yakunin A.F."/>
            <person name="Hanson A.D."/>
        </authorList>
    </citation>
    <scope>FUNCTION</scope>
    <scope>DOMAIN</scope>
    <scope>CATALYTIC ACTIVITY</scope>
    <scope>BIOPHYSICOCHEMICAL PROPERTIES</scope>
    <scope>ACTIVITY REGULATION</scope>
    <scope>COFACTOR</scope>
    <scope>MUTAGENESIS OF ASP-220; ASN-221 AND ASP-256</scope>
</reference>
<reference key="7">
    <citation type="journal article" date="2005" name="Acta Crystallogr. F">
        <title>The structure at 1.7A resolution of the protein product of the At2g17340 gene from Arabidopsis thaliana.</title>
        <authorList>
            <person name="Bitto E."/>
            <person name="Bingman C.A."/>
            <person name="Allard S.T.M."/>
            <person name="Wesenberg G.E."/>
            <person name="Phillips G.N. Jr."/>
        </authorList>
    </citation>
    <scope>X-RAY CRYSTALLOGRAPHY (1.7 ANGSTROMS) OF 2-367</scope>
    <scope>SUBUNIT</scope>
</reference>
<dbReference type="EC" id="3.1.3.-" evidence="2"/>
<dbReference type="EMBL" id="CP002685">
    <property type="protein sequence ID" value="AEC06614.1"/>
    <property type="molecule type" value="Genomic_DNA"/>
</dbReference>
<dbReference type="EMBL" id="AY096682">
    <property type="protein sequence ID" value="AAM20316.1"/>
    <property type="molecule type" value="mRNA"/>
</dbReference>
<dbReference type="EMBL" id="AY050977">
    <property type="protein sequence ID" value="AAK93654.1"/>
    <property type="molecule type" value="mRNA"/>
</dbReference>
<dbReference type="EMBL" id="AY086556">
    <property type="protein sequence ID" value="AAM63619.1"/>
    <property type="molecule type" value="mRNA"/>
</dbReference>
<dbReference type="PIR" id="A84551">
    <property type="entry name" value="A84551"/>
</dbReference>
<dbReference type="RefSeq" id="NP_565412.1">
    <property type="nucleotide sequence ID" value="NM_127289.4"/>
</dbReference>
<dbReference type="PDB" id="1XFI">
    <property type="method" value="X-ray"/>
    <property type="resolution" value="1.70 A"/>
    <property type="chains" value="A=2-367"/>
</dbReference>
<dbReference type="PDB" id="2Q40">
    <property type="method" value="X-ray"/>
    <property type="resolution" value="1.70 A"/>
    <property type="chains" value="A=2-367"/>
</dbReference>
<dbReference type="PDBsum" id="1XFI"/>
<dbReference type="PDBsum" id="2Q40"/>
<dbReference type="SMR" id="Q949P3"/>
<dbReference type="FunCoup" id="Q949P3">
    <property type="interactions" value="400"/>
</dbReference>
<dbReference type="STRING" id="3702.Q949P3"/>
<dbReference type="iPTMnet" id="Q949P3"/>
<dbReference type="PaxDb" id="3702-AT2G17340.1"/>
<dbReference type="ProteomicsDB" id="234590"/>
<dbReference type="DNASU" id="816241"/>
<dbReference type="EnsemblPlants" id="AT2G17340.1">
    <property type="protein sequence ID" value="AT2G17340.1"/>
    <property type="gene ID" value="AT2G17340"/>
</dbReference>
<dbReference type="GeneID" id="816241"/>
<dbReference type="Gramene" id="AT2G17340.1">
    <property type="protein sequence ID" value="AT2G17340.1"/>
    <property type="gene ID" value="AT2G17340"/>
</dbReference>
<dbReference type="KEGG" id="ath:AT2G17340"/>
<dbReference type="Araport" id="AT2G17340"/>
<dbReference type="TAIR" id="AT2G17340"/>
<dbReference type="eggNOG" id="KOG4584">
    <property type="taxonomic scope" value="Eukaryota"/>
</dbReference>
<dbReference type="HOGENOM" id="CLU_039785_0_0_1"/>
<dbReference type="InParanoid" id="Q949P3"/>
<dbReference type="OMA" id="RFKVEPC"/>
<dbReference type="PhylomeDB" id="Q949P3"/>
<dbReference type="EvolutionaryTrace" id="Q949P3"/>
<dbReference type="PRO" id="PR:Q949P3"/>
<dbReference type="Proteomes" id="UP000006548">
    <property type="component" value="Chromosome 2"/>
</dbReference>
<dbReference type="ExpressionAtlas" id="Q949P3">
    <property type="expression patterns" value="baseline and differential"/>
</dbReference>
<dbReference type="GO" id="GO:0005829">
    <property type="term" value="C:cytosol"/>
    <property type="evidence" value="ECO:0007005"/>
    <property type="project" value="TAIR"/>
</dbReference>
<dbReference type="GO" id="GO:0005739">
    <property type="term" value="C:mitochondrion"/>
    <property type="evidence" value="ECO:0007005"/>
    <property type="project" value="TAIR"/>
</dbReference>
<dbReference type="GO" id="GO:0005524">
    <property type="term" value="F:ATP binding"/>
    <property type="evidence" value="ECO:0007669"/>
    <property type="project" value="InterPro"/>
</dbReference>
<dbReference type="GO" id="GO:0016787">
    <property type="term" value="F:hydrolase activity"/>
    <property type="evidence" value="ECO:0007669"/>
    <property type="project" value="UniProtKB-KW"/>
</dbReference>
<dbReference type="GO" id="GO:0046872">
    <property type="term" value="F:metal ion binding"/>
    <property type="evidence" value="ECO:0007669"/>
    <property type="project" value="UniProtKB-KW"/>
</dbReference>
<dbReference type="GO" id="GO:0015937">
    <property type="term" value="P:coenzyme A biosynthetic process"/>
    <property type="evidence" value="ECO:0007669"/>
    <property type="project" value="InterPro"/>
</dbReference>
<dbReference type="FunFam" id="3.40.50.10880:FF:000004">
    <property type="entry name" value="Pantothenate kinase"/>
    <property type="match status" value="1"/>
</dbReference>
<dbReference type="FunFam" id="1.20.1700.10:FF:000003">
    <property type="entry name" value="Pantothenate kinase 4"/>
    <property type="match status" value="1"/>
</dbReference>
<dbReference type="Gene3D" id="1.20.1700.10">
    <property type="entry name" value="AF1104-like"/>
    <property type="match status" value="1"/>
</dbReference>
<dbReference type="Gene3D" id="1.10.285.20">
    <property type="entry name" value="Uncharacterised protein PF01937, DUF89, domain 2"/>
    <property type="match status" value="1"/>
</dbReference>
<dbReference type="Gene3D" id="3.40.50.10880">
    <property type="entry name" value="Uncharacterised protein PF01937, DUF89, domain 3"/>
    <property type="match status" value="1"/>
</dbReference>
<dbReference type="InterPro" id="IPR036075">
    <property type="entry name" value="ARMT-1-like_metal-bd_sf"/>
</dbReference>
<dbReference type="InterPro" id="IPR002791">
    <property type="entry name" value="ARMT1-like_metal-bd"/>
</dbReference>
<dbReference type="InterPro" id="IPR016949">
    <property type="entry name" value="At2g17340"/>
</dbReference>
<dbReference type="InterPro" id="IPR035073">
    <property type="entry name" value="At2g17340_3_helix_bundle"/>
</dbReference>
<dbReference type="InterPro" id="IPR004567">
    <property type="entry name" value="Type_II_PanK"/>
</dbReference>
<dbReference type="PANTHER" id="PTHR12280:SF35">
    <property type="entry name" value="4'-PHOSPHOPANTETHEINE PHOSPHATASE"/>
    <property type="match status" value="1"/>
</dbReference>
<dbReference type="PANTHER" id="PTHR12280">
    <property type="entry name" value="PANTOTHENATE KINASE"/>
    <property type="match status" value="1"/>
</dbReference>
<dbReference type="Pfam" id="PF01937">
    <property type="entry name" value="ARMT1-like_dom"/>
    <property type="match status" value="1"/>
</dbReference>
<dbReference type="PIRSF" id="PIRSF030210">
    <property type="entry name" value="UCP030210"/>
    <property type="match status" value="1"/>
</dbReference>
<dbReference type="SUPFAM" id="SSF111321">
    <property type="entry name" value="AF1104-like"/>
    <property type="match status" value="1"/>
</dbReference>
<keyword id="KW-0002">3D-structure</keyword>
<keyword id="KW-0007">Acetylation</keyword>
<keyword id="KW-0378">Hydrolase</keyword>
<keyword id="KW-0464">Manganese</keyword>
<keyword id="KW-0479">Metal-binding</keyword>
<keyword id="KW-0533">Nickel</keyword>
<keyword id="KW-1185">Reference proteome</keyword>
<organism>
    <name type="scientific">Arabidopsis thaliana</name>
    <name type="common">Mouse-ear cress</name>
    <dbReference type="NCBI Taxonomy" id="3702"/>
    <lineage>
        <taxon>Eukaryota</taxon>
        <taxon>Viridiplantae</taxon>
        <taxon>Streptophyta</taxon>
        <taxon>Embryophyta</taxon>
        <taxon>Tracheophyta</taxon>
        <taxon>Spermatophyta</taxon>
        <taxon>Magnoliopsida</taxon>
        <taxon>eudicotyledons</taxon>
        <taxon>Gunneridae</taxon>
        <taxon>Pentapetalae</taxon>
        <taxon>rosids</taxon>
        <taxon>malvids</taxon>
        <taxon>Brassicales</taxon>
        <taxon>Brassicaceae</taxon>
        <taxon>Camelineae</taxon>
        <taxon>Arabidopsis</taxon>
    </lineage>
</organism>
<protein>
    <recommendedName>
        <fullName evidence="3">Damage-control phosphatase At2g17340</fullName>
        <ecNumber evidence="2">3.1.3.-</ecNumber>
    </recommendedName>
    <alternativeName>
        <fullName evidence="3">Sugar phosphates phosphatase At2g17340</fullName>
    </alternativeName>
</protein>
<accession>Q949P3</accession>
<accession>Q7XJS9</accession>
<accession>Q8LCJ8</accession>
<name>D89S2_ARATH</name>
<comment type="function">
    <text evidence="2">Metal-dependent phosphatase with probable damage-control functions (PubMed:27322068). Shows phosphatase activity against several substrates, including sugar phosphates and p-nitrophenyl phosphate(pNPP) (PubMed:27322068). Prefers sugar phosphate substrates, including the extremely potent glycating agents ribose-5-phosphate and erythrose-4-phosphate (PubMed:27322068).</text>
</comment>
<comment type="cofactor">
    <cofactor evidence="2">
        <name>Mn(2+)</name>
        <dbReference type="ChEBI" id="CHEBI:29035"/>
    </cofactor>
    <cofactor evidence="2">
        <name>Ni(2+)</name>
        <dbReference type="ChEBI" id="CHEBI:49786"/>
    </cofactor>
    <text evidence="2">Phosphatase activity is strongly promoted by several divalent cations but it is suggested that Mn(2+) and possibly Ni(2+) represent biologically relevant metal ion cofactors for damage-control phosphatases.</text>
</comment>
<comment type="activity regulation">
    <text evidence="2">Activity is strongly promoted by Co(2+), Ni(2+), Mg(2+), Cu(2+) and Mn(2+) (PubMed:27322068). Activity is inhibited by EDTA (PubMed:27322068).</text>
</comment>
<comment type="biophysicochemical properties">
    <kinetics>
        <KM evidence="2">418 uM for p-nitrophenylphosphate</KM>
        <KM evidence="2">70 uM for ribose 5-phosphate</KM>
        <KM evidence="2">90 uM for 2-desoxyribose 5-phosphate</KM>
        <text evidence="2">kcat is 1.68 sec(-1) with p-nitrophenylphosphate as substrate. kcat is 0.94 sec(-1) with ribose 5-phosphate as substrate. kcat is 1.1 sec(-1) with 2-desoxyribose 5-phosphate as substrate.</text>
    </kinetics>
</comment>
<comment type="subunit">
    <text evidence="5">Multimer.</text>
</comment>
<comment type="domain">
    <text evidence="6">Subfamily II proteins have an EGMGR motif about 50 residues from the C-terminus (Probable). This motif lies near the metal-binding residues in the putative substrate-binding cleft 2 (Probable). Subfamily II proteins occur only in eukaryotes, in two forms: as a stand-alone unit in plants, and as a C-terminal domain of pantothenate kinases in plants, animals, and chytrid fungi (Probable).</text>
</comment>
<comment type="similarity">
    <text evidence="4">Belongs to the damage-control phosphatase family. Phosphopantetheine phosphatase II subfamily.</text>
</comment>
<evidence type="ECO:0000250" key="1">
    <source>
        <dbReference type="UniProtKB" id="Q04371"/>
    </source>
</evidence>
<evidence type="ECO:0000269" key="2">
    <source>
    </source>
</evidence>
<evidence type="ECO:0000303" key="3">
    <source>
    </source>
</evidence>
<evidence type="ECO:0000305" key="4"/>
<evidence type="ECO:0000305" key="5">
    <source>
    </source>
</evidence>
<evidence type="ECO:0000305" key="6">
    <source>
    </source>
</evidence>
<evidence type="ECO:0007744" key="7">
    <source>
    </source>
</evidence>
<evidence type="ECO:0007829" key="8">
    <source>
        <dbReference type="PDB" id="1XFI"/>
    </source>
</evidence>
<evidence type="ECO:0007829" key="9">
    <source>
        <dbReference type="PDB" id="2Q40"/>
    </source>
</evidence>